<sequence length="505" mass="59364">MAQIDFRKKINWHRRYRSPQGVKTEHEILRIFESDRGRIINSPAIRRLQQKTQVFPLERNAAVRTRLTHSMEVQQVGRYIAKEILSRLKELKLLEAYGLDELTGPFESIVEMSCLMHDIGNPPFGHFGEAAINDWFRQRLYPEDAESQPLTDDRCSVAALRLRDGEEPLNALRRKIRQDLCHFEGNAQGIRLVHTLMRMNLTWAQVGGILKYTRPAWWRGETPETHHYLMKKPGYYLSEEAYIARLRKELNLALYSRFPLTWIMEAADDISYCVADLEDAVEKRIFTVEQLYHHLHEAWGQHEKGSLFSLVVENAWEKSRSNSLSRSTEDQFFMYLRVNTLNKLVPYAAQRFIDNLPAIFAGTFNHALLEDASECSDLLKLYKNVAVKHVFSHPDVEQLELQGYRVISGLLEIYRPLLNLSLSDFTELVEKERVKRFPIETRLFHKLSTRHRLAYVEAVSKLPSDSPEFPLWEYYYRCRLLQDYISGMTDLYAWDEYRRLMAVEQ</sequence>
<organism>
    <name type="scientific">Escherichia coli O127:H6 (strain E2348/69 / EPEC)</name>
    <dbReference type="NCBI Taxonomy" id="574521"/>
    <lineage>
        <taxon>Bacteria</taxon>
        <taxon>Pseudomonadati</taxon>
        <taxon>Pseudomonadota</taxon>
        <taxon>Gammaproteobacteria</taxon>
        <taxon>Enterobacterales</taxon>
        <taxon>Enterobacteriaceae</taxon>
        <taxon>Escherichia</taxon>
    </lineage>
</organism>
<evidence type="ECO:0000255" key="1">
    <source>
        <dbReference type="HAMAP-Rule" id="MF_00030"/>
    </source>
</evidence>
<evidence type="ECO:0000255" key="2">
    <source>
        <dbReference type="PROSITE-ProRule" id="PRU01175"/>
    </source>
</evidence>
<protein>
    <recommendedName>
        <fullName evidence="1">Deoxyguanosinetriphosphate triphosphohydrolase</fullName>
        <shortName evidence="1">dGTP triphosphohydrolase</shortName>
        <shortName evidence="1">dGTPase</shortName>
        <ecNumber evidence="1">3.1.5.1</ecNumber>
    </recommendedName>
</protein>
<name>DGTP_ECO27</name>
<feature type="chain" id="PRO_1000116915" description="Deoxyguanosinetriphosphate triphosphohydrolase">
    <location>
        <begin position="1"/>
        <end position="505"/>
    </location>
</feature>
<feature type="domain" description="HD" evidence="2">
    <location>
        <begin position="66"/>
        <end position="273"/>
    </location>
</feature>
<reference key="1">
    <citation type="journal article" date="2009" name="J. Bacteriol.">
        <title>Complete genome sequence and comparative genome analysis of enteropathogenic Escherichia coli O127:H6 strain E2348/69.</title>
        <authorList>
            <person name="Iguchi A."/>
            <person name="Thomson N.R."/>
            <person name="Ogura Y."/>
            <person name="Saunders D."/>
            <person name="Ooka T."/>
            <person name="Henderson I.R."/>
            <person name="Harris D."/>
            <person name="Asadulghani M."/>
            <person name="Kurokawa K."/>
            <person name="Dean P."/>
            <person name="Kenny B."/>
            <person name="Quail M.A."/>
            <person name="Thurston S."/>
            <person name="Dougan G."/>
            <person name="Hayashi T."/>
            <person name="Parkhill J."/>
            <person name="Frankel G."/>
        </authorList>
    </citation>
    <scope>NUCLEOTIDE SEQUENCE [LARGE SCALE GENOMIC DNA]</scope>
    <source>
        <strain>E2348/69 / EPEC</strain>
    </source>
</reference>
<comment type="function">
    <text evidence="1">dGTPase preferentially hydrolyzes dGTP over the other canonical NTPs.</text>
</comment>
<comment type="catalytic activity">
    <reaction evidence="1">
        <text>dGTP + H2O = 2'-deoxyguanosine + triphosphate + H(+)</text>
        <dbReference type="Rhea" id="RHEA:15193"/>
        <dbReference type="ChEBI" id="CHEBI:15377"/>
        <dbReference type="ChEBI" id="CHEBI:15378"/>
        <dbReference type="ChEBI" id="CHEBI:17172"/>
        <dbReference type="ChEBI" id="CHEBI:18036"/>
        <dbReference type="ChEBI" id="CHEBI:61429"/>
        <dbReference type="EC" id="3.1.5.1"/>
    </reaction>
</comment>
<comment type="cofactor">
    <cofactor evidence="1">
        <name>Mg(2+)</name>
        <dbReference type="ChEBI" id="CHEBI:18420"/>
    </cofactor>
</comment>
<comment type="subunit">
    <text evidence="1">Homotetramer.</text>
</comment>
<comment type="similarity">
    <text evidence="1">Belongs to the dGTPase family. Type 1 subfamily.</text>
</comment>
<accession>B7UIK7</accession>
<keyword id="KW-0378">Hydrolase</keyword>
<keyword id="KW-0460">Magnesium</keyword>
<keyword id="KW-1185">Reference proteome</keyword>
<gene>
    <name evidence="1" type="primary">dgt</name>
    <name type="ordered locus">E2348C_0167</name>
</gene>
<dbReference type="EC" id="3.1.5.1" evidence="1"/>
<dbReference type="EMBL" id="FM180568">
    <property type="protein sequence ID" value="CAS07715.1"/>
    <property type="molecule type" value="Genomic_DNA"/>
</dbReference>
<dbReference type="RefSeq" id="WP_000057087.1">
    <property type="nucleotide sequence ID" value="NC_011601.1"/>
</dbReference>
<dbReference type="SMR" id="B7UIK7"/>
<dbReference type="KEGG" id="ecg:E2348C_0167"/>
<dbReference type="HOGENOM" id="CLU_028163_2_1_6"/>
<dbReference type="Proteomes" id="UP000008205">
    <property type="component" value="Chromosome"/>
</dbReference>
<dbReference type="GO" id="GO:0008832">
    <property type="term" value="F:dGTPase activity"/>
    <property type="evidence" value="ECO:0007669"/>
    <property type="project" value="UniProtKB-UniRule"/>
</dbReference>
<dbReference type="GO" id="GO:0000287">
    <property type="term" value="F:magnesium ion binding"/>
    <property type="evidence" value="ECO:0007669"/>
    <property type="project" value="UniProtKB-UniRule"/>
</dbReference>
<dbReference type="GO" id="GO:0006203">
    <property type="term" value="P:dGTP catabolic process"/>
    <property type="evidence" value="ECO:0007669"/>
    <property type="project" value="InterPro"/>
</dbReference>
<dbReference type="CDD" id="cd00077">
    <property type="entry name" value="HDc"/>
    <property type="match status" value="1"/>
</dbReference>
<dbReference type="FunFam" id="1.10.3210.10:FF:000009">
    <property type="entry name" value="Deoxyguanosinetriphosphate triphosphohydrolase"/>
    <property type="match status" value="1"/>
</dbReference>
<dbReference type="FunFam" id="1.10.3210.10:FF:000010">
    <property type="entry name" value="Deoxyguanosinetriphosphate triphosphohydrolase"/>
    <property type="match status" value="1"/>
</dbReference>
<dbReference type="FunFam" id="1.10.3410.10:FF:000001">
    <property type="entry name" value="Deoxyguanosinetriphosphate triphosphohydrolase"/>
    <property type="match status" value="1"/>
</dbReference>
<dbReference type="Gene3D" id="1.10.3210.10">
    <property type="entry name" value="Hypothetical protein af1432"/>
    <property type="match status" value="2"/>
</dbReference>
<dbReference type="Gene3D" id="1.10.3410.10">
    <property type="entry name" value="putative deoxyguanosinetriphosphate triphosphohydrolase like domain"/>
    <property type="match status" value="1"/>
</dbReference>
<dbReference type="HAMAP" id="MF_00030">
    <property type="entry name" value="dGTPase_type1"/>
    <property type="match status" value="1"/>
</dbReference>
<dbReference type="InterPro" id="IPR023293">
    <property type="entry name" value="dGTP_triP_hydro_central_sf"/>
</dbReference>
<dbReference type="InterPro" id="IPR006261">
    <property type="entry name" value="dGTPase"/>
</dbReference>
<dbReference type="InterPro" id="IPR050135">
    <property type="entry name" value="dGTPase-like"/>
</dbReference>
<dbReference type="InterPro" id="IPR020779">
    <property type="entry name" value="dNTPase_1"/>
</dbReference>
<dbReference type="InterPro" id="IPR003607">
    <property type="entry name" value="HD/PDEase_dom"/>
</dbReference>
<dbReference type="InterPro" id="IPR006674">
    <property type="entry name" value="HD_domain"/>
</dbReference>
<dbReference type="NCBIfam" id="TIGR01353">
    <property type="entry name" value="dGTP_triPase"/>
    <property type="match status" value="1"/>
</dbReference>
<dbReference type="NCBIfam" id="NF003429">
    <property type="entry name" value="PRK04926.1"/>
    <property type="match status" value="1"/>
</dbReference>
<dbReference type="PANTHER" id="PTHR11373:SF32">
    <property type="entry name" value="DEOXYGUANOSINETRIPHOSPHATE TRIPHOSPHOHYDROLASE"/>
    <property type="match status" value="1"/>
</dbReference>
<dbReference type="PANTHER" id="PTHR11373">
    <property type="entry name" value="DEOXYNUCLEOSIDE TRIPHOSPHATE TRIPHOSPHOHYDROLASE"/>
    <property type="match status" value="1"/>
</dbReference>
<dbReference type="Pfam" id="PF01966">
    <property type="entry name" value="HD"/>
    <property type="match status" value="1"/>
</dbReference>
<dbReference type="SMART" id="SM00471">
    <property type="entry name" value="HDc"/>
    <property type="match status" value="1"/>
</dbReference>
<dbReference type="SUPFAM" id="SSF109604">
    <property type="entry name" value="HD-domain/PDEase-like"/>
    <property type="match status" value="1"/>
</dbReference>
<dbReference type="PROSITE" id="PS51831">
    <property type="entry name" value="HD"/>
    <property type="match status" value="1"/>
</dbReference>
<proteinExistence type="inferred from homology"/>